<dbReference type="EMBL" id="Z97369">
    <property type="protein sequence ID" value="CAB10612.1"/>
    <property type="molecule type" value="Genomic_DNA"/>
</dbReference>
<dbReference type="EMBL" id="AL583922">
    <property type="protein sequence ID" value="CAC30575.1"/>
    <property type="molecule type" value="Genomic_DNA"/>
</dbReference>
<dbReference type="PIR" id="B87112">
    <property type="entry name" value="B87112"/>
</dbReference>
<dbReference type="RefSeq" id="NP_302119.1">
    <property type="nucleotide sequence ID" value="NC_002677.1"/>
</dbReference>
<dbReference type="RefSeq" id="WP_010908440.1">
    <property type="nucleotide sequence ID" value="NC_002677.1"/>
</dbReference>
<dbReference type="STRING" id="272631.gene:17575465"/>
<dbReference type="KEGG" id="mle:ML1624"/>
<dbReference type="PATRIC" id="fig|272631.5.peg.3059"/>
<dbReference type="Leproma" id="ML1624"/>
<dbReference type="eggNOG" id="COG1061">
    <property type="taxonomic scope" value="Bacteria"/>
</dbReference>
<dbReference type="HOGENOM" id="CLU_020861_2_0_11"/>
<dbReference type="OrthoDB" id="5165890at2"/>
<dbReference type="Proteomes" id="UP000000806">
    <property type="component" value="Chromosome"/>
</dbReference>
<dbReference type="GO" id="GO:0005829">
    <property type="term" value="C:cytosol"/>
    <property type="evidence" value="ECO:0007669"/>
    <property type="project" value="TreeGrafter"/>
</dbReference>
<dbReference type="GO" id="GO:0005524">
    <property type="term" value="F:ATP binding"/>
    <property type="evidence" value="ECO:0007669"/>
    <property type="project" value="InterPro"/>
</dbReference>
<dbReference type="GO" id="GO:0003677">
    <property type="term" value="F:DNA binding"/>
    <property type="evidence" value="ECO:0007669"/>
    <property type="project" value="InterPro"/>
</dbReference>
<dbReference type="GO" id="GO:0016787">
    <property type="term" value="F:hydrolase activity"/>
    <property type="evidence" value="ECO:0007669"/>
    <property type="project" value="InterPro"/>
</dbReference>
<dbReference type="CDD" id="cd18785">
    <property type="entry name" value="SF2_C"/>
    <property type="match status" value="1"/>
</dbReference>
<dbReference type="Gene3D" id="3.40.50.300">
    <property type="entry name" value="P-loop containing nucleotide triphosphate hydrolases"/>
    <property type="match status" value="2"/>
</dbReference>
<dbReference type="InterPro" id="IPR006935">
    <property type="entry name" value="Helicase/UvrB_N"/>
</dbReference>
<dbReference type="InterPro" id="IPR014001">
    <property type="entry name" value="Helicase_ATP-bd"/>
</dbReference>
<dbReference type="InterPro" id="IPR050742">
    <property type="entry name" value="Helicase_Restrict-Modif_Enz"/>
</dbReference>
<dbReference type="InterPro" id="IPR027417">
    <property type="entry name" value="P-loop_NTPase"/>
</dbReference>
<dbReference type="PANTHER" id="PTHR47396:SF2">
    <property type="entry name" value="HELICASE ATP-BINDING DOMAIN-CONTAINING PROTEIN"/>
    <property type="match status" value="1"/>
</dbReference>
<dbReference type="PANTHER" id="PTHR47396">
    <property type="entry name" value="TYPE I RESTRICTION ENZYME ECOKI R PROTEIN"/>
    <property type="match status" value="1"/>
</dbReference>
<dbReference type="Pfam" id="PF04851">
    <property type="entry name" value="ResIII"/>
    <property type="match status" value="1"/>
</dbReference>
<dbReference type="SMART" id="SM00487">
    <property type="entry name" value="DEXDc"/>
    <property type="match status" value="1"/>
</dbReference>
<dbReference type="SUPFAM" id="SSF52540">
    <property type="entry name" value="P-loop containing nucleoside triphosphate hydrolases"/>
    <property type="match status" value="2"/>
</dbReference>
<dbReference type="PROSITE" id="PS51192">
    <property type="entry name" value="HELICASE_ATP_BIND_1"/>
    <property type="match status" value="1"/>
</dbReference>
<dbReference type="PROSITE" id="PS51194">
    <property type="entry name" value="HELICASE_CTER"/>
    <property type="match status" value="1"/>
</dbReference>
<reference key="1">
    <citation type="journal article" date="2001" name="Nature">
        <title>Massive gene decay in the leprosy bacillus.</title>
        <authorList>
            <person name="Cole S.T."/>
            <person name="Eiglmeier K."/>
            <person name="Parkhill J."/>
            <person name="James K.D."/>
            <person name="Thomson N.R."/>
            <person name="Wheeler P.R."/>
            <person name="Honore N."/>
            <person name="Garnier T."/>
            <person name="Churcher C.M."/>
            <person name="Harris D.E."/>
            <person name="Mungall K.L."/>
            <person name="Basham D."/>
            <person name="Brown D."/>
            <person name="Chillingworth T."/>
            <person name="Connor R."/>
            <person name="Davies R.M."/>
            <person name="Devlin K."/>
            <person name="Duthoy S."/>
            <person name="Feltwell T."/>
            <person name="Fraser A."/>
            <person name="Hamlin N."/>
            <person name="Holroyd S."/>
            <person name="Hornsby T."/>
            <person name="Jagels K."/>
            <person name="Lacroix C."/>
            <person name="Maclean J."/>
            <person name="Moule S."/>
            <person name="Murphy L.D."/>
            <person name="Oliver K."/>
            <person name="Quail M.A."/>
            <person name="Rajandream M.A."/>
            <person name="Rutherford K.M."/>
            <person name="Rutter S."/>
            <person name="Seeger K."/>
            <person name="Simon S."/>
            <person name="Simmonds M."/>
            <person name="Skelton J."/>
            <person name="Squares R."/>
            <person name="Squares S."/>
            <person name="Stevens K."/>
            <person name="Taylor K."/>
            <person name="Whitehead S."/>
            <person name="Woodward J.R."/>
            <person name="Barrell B.G."/>
        </authorList>
    </citation>
    <scope>NUCLEOTIDE SEQUENCE [LARGE SCALE GENOMIC DNA]</scope>
    <source>
        <strain>TN</strain>
    </source>
</reference>
<name>Y1624_MYCLE</name>
<evidence type="ECO:0000255" key="1">
    <source>
        <dbReference type="PROSITE-ProRule" id="PRU00541"/>
    </source>
</evidence>
<evidence type="ECO:0000255" key="2">
    <source>
        <dbReference type="PROSITE-ProRule" id="PRU00542"/>
    </source>
</evidence>
<evidence type="ECO:0000256" key="3">
    <source>
        <dbReference type="SAM" id="MobiDB-lite"/>
    </source>
</evidence>
<evidence type="ECO:0000305" key="4"/>
<accession>O33011</accession>
<proteinExistence type="predicted"/>
<keyword id="KW-1185">Reference proteome</keyword>
<protein>
    <recommendedName>
        <fullName>Uncharacterized protein ML1624</fullName>
    </recommendedName>
</protein>
<comment type="similarity">
    <text evidence="4">To M.tuberculosis Rv2917.</text>
</comment>
<sequence>MTQSDHRHTRPSSYGGTVLTQRVSQATVEDSRPLRGWQRRAMVKYLASQPRDFLAVATPGSGKTTFALRVMTELLNSHAVEQVTVVVPTEHLKVQWTRAAATHGLALDPKFSNTNPRTSPEYHGVTMTYAQVAAHPTLHRVRTEGRRTLVIFDEIHHGGNAKAWGDAIREAFSDATRRLALTGTPFRSDDKPIPFVTYALDADGLMHSQADHTYSYAEGLADGVVRPVVFLVYSGQARWRNSAGEEHAARLGEPLSAEQTARAWRTALDPSGEWMPAVISAADQRLRQLRTHVPDAGGMIIASDQTAARAYANLLAQMTSETPTLVLSDDPGSSARITEFAKNTSQWLIAVRMVSEGVDIPRLSVGIYATSASTPLFFAQAIGRFVRSRHPGETASIFVPSVPNLLQLASELETQRNHVLGKPHRESTDNPLGGNPATMTQTEQDDTEKYFTAIGADAELDQIIFDGSSFGTATPAGSEEEAYYLGIPGLLDADQMRALLHRRQNEQLQKRTAAQQASSTPDRTSGAPASVHGQLRELRRELNSLVSIAHHHTGKPHGWIHNELRRRCGGPPIAAATHDQLKARIDAVRQLNAEPS</sequence>
<feature type="chain" id="PRO_0000104103" description="Uncharacterized protein ML1624">
    <location>
        <begin position="1"/>
        <end position="596"/>
    </location>
</feature>
<feature type="domain" description="Helicase ATP-binding" evidence="1">
    <location>
        <begin position="44"/>
        <end position="203"/>
    </location>
</feature>
<feature type="domain" description="Helicase C-terminal" evidence="2">
    <location>
        <begin position="285"/>
        <end position="432"/>
    </location>
</feature>
<feature type="region of interest" description="Disordered" evidence="3">
    <location>
        <begin position="420"/>
        <end position="444"/>
    </location>
</feature>
<feature type="region of interest" description="Disordered" evidence="3">
    <location>
        <begin position="506"/>
        <end position="533"/>
    </location>
</feature>
<feature type="compositionally biased region" description="Polar residues" evidence="3">
    <location>
        <begin position="510"/>
        <end position="523"/>
    </location>
</feature>
<gene>
    <name type="ordered locus">ML1624</name>
    <name type="ORF">MLCB250.18c</name>
</gene>
<organism>
    <name type="scientific">Mycobacterium leprae (strain TN)</name>
    <dbReference type="NCBI Taxonomy" id="272631"/>
    <lineage>
        <taxon>Bacteria</taxon>
        <taxon>Bacillati</taxon>
        <taxon>Actinomycetota</taxon>
        <taxon>Actinomycetes</taxon>
        <taxon>Mycobacteriales</taxon>
        <taxon>Mycobacteriaceae</taxon>
        <taxon>Mycobacterium</taxon>
    </lineage>
</organism>